<protein>
    <recommendedName>
        <fullName evidence="1">Alanine--tRNA ligase</fullName>
        <ecNumber evidence="1">6.1.1.7</ecNumber>
    </recommendedName>
    <alternativeName>
        <fullName evidence="1">Alanyl-tRNA synthetase</fullName>
        <shortName evidence="1">AlaRS</shortName>
    </alternativeName>
</protein>
<gene>
    <name evidence="1" type="primary">alaS</name>
    <name type="ordered locus">spyM18_1399</name>
</gene>
<sequence>MKELSSAQIRQMWLDFWKSKGHCVEPSANLVPVNDPTLLWINSGVATLKKYFDGSVIPENPRITNAQKSIRTNDIENVGKTARHHTMFEMLGNFSIGDYFRNEAIGWGFELLTSPEWFDFPKDKLYMTYYPDDKDSYNRWIACGVEPSHLVPIEDNFWEIGAGPSGPDTEIFFDRGEDFDPENIGIRLLAEDIENDRYIEIWNIVLSQFNADPAVPRSEYKELPNKNIDTGAGLERLAAVMQGAKTNFETDLFMPIIREVEKLSGKTYDPDGDNMSFKVIADHIRALLFAIGDGALPGNEGRGYVLRRLLRRAVMHGRRLGINETFLYKLVLTVGQIMESYYPEVLEKRDFIEKIVKREEETFARTIDAGSGHLDSLLAQLKAEGKDTLEGKDIFKLYDTYGFPVELTEELAEDAGYKIDHEGFKSAMKEQQDRARAAVVKGGSMGMQNETLAGIVEESRFEYDTYSLESSLSVIIADNERTEAVSEGQALLVFAQTPFYAEMGGQVADTGRIKNDKGDTVAEVVDVQKAPNGQPLHTVNVLASLSVGTNYTLEINKERRLAVEKNHTATHLLHAALHNVIGEHATQAGSLNEEEFLRFDFTHFEAVSNEELRHIEQEVNEQIWNALTITTTETDVETAKERGAMALFGEKYGKVVRVVQIGNYSVELCGGTHLNNSSEIGLFKIVKEEGIGSGTRRIIAVTGRQAFEAYRNQEDALKEIAATVKAPQLKDAAAKVQALSDSLRDFQKENAELKEKAAAAAAGDVFKDVQEAKGVRFIASQVDVADAGALRTFADNWKQKDYSDVLVLVAAIGEKVNVLVASKTKDVHAGNMIKELAPIVAGRGGGKPDMAMAGGSDASKIAELLAAVAETV</sequence>
<name>SYA_STRP8</name>
<proteinExistence type="inferred from homology"/>
<reference key="1">
    <citation type="journal article" date="2002" name="Proc. Natl. Acad. Sci. U.S.A.">
        <title>Genome sequence and comparative microarray analysis of serotype M18 group A Streptococcus strains associated with acute rheumatic fever outbreaks.</title>
        <authorList>
            <person name="Smoot J.C."/>
            <person name="Barbian K.D."/>
            <person name="Van Gompel J.J."/>
            <person name="Smoot L.M."/>
            <person name="Chaussee M.S."/>
            <person name="Sylva G.L."/>
            <person name="Sturdevant D.E."/>
            <person name="Ricklefs S.M."/>
            <person name="Porcella S.F."/>
            <person name="Parkins L.D."/>
            <person name="Beres S.B."/>
            <person name="Campbell D.S."/>
            <person name="Smith T.M."/>
            <person name="Zhang Q."/>
            <person name="Kapur V."/>
            <person name="Daly J.A."/>
            <person name="Veasy L.G."/>
            <person name="Musser J.M."/>
        </authorList>
    </citation>
    <scope>NUCLEOTIDE SEQUENCE [LARGE SCALE GENOMIC DNA]</scope>
    <source>
        <strain>MGAS8232</strain>
    </source>
</reference>
<organism>
    <name type="scientific">Streptococcus pyogenes serotype M18 (strain MGAS8232)</name>
    <dbReference type="NCBI Taxonomy" id="186103"/>
    <lineage>
        <taxon>Bacteria</taxon>
        <taxon>Bacillati</taxon>
        <taxon>Bacillota</taxon>
        <taxon>Bacilli</taxon>
        <taxon>Lactobacillales</taxon>
        <taxon>Streptococcaceae</taxon>
        <taxon>Streptococcus</taxon>
    </lineage>
</organism>
<keyword id="KW-0030">Aminoacyl-tRNA synthetase</keyword>
<keyword id="KW-0067">ATP-binding</keyword>
<keyword id="KW-0963">Cytoplasm</keyword>
<keyword id="KW-0436">Ligase</keyword>
<keyword id="KW-0479">Metal-binding</keyword>
<keyword id="KW-0547">Nucleotide-binding</keyword>
<keyword id="KW-0648">Protein biosynthesis</keyword>
<keyword id="KW-0694">RNA-binding</keyword>
<keyword id="KW-0820">tRNA-binding</keyword>
<keyword id="KW-0862">Zinc</keyword>
<feature type="chain" id="PRO_0000075217" description="Alanine--tRNA ligase">
    <location>
        <begin position="1"/>
        <end position="872"/>
    </location>
</feature>
<feature type="binding site" evidence="1">
    <location>
        <position position="567"/>
    </location>
    <ligand>
        <name>Zn(2+)</name>
        <dbReference type="ChEBI" id="CHEBI:29105"/>
    </ligand>
</feature>
<feature type="binding site" evidence="1">
    <location>
        <position position="571"/>
    </location>
    <ligand>
        <name>Zn(2+)</name>
        <dbReference type="ChEBI" id="CHEBI:29105"/>
    </ligand>
</feature>
<feature type="binding site" evidence="1">
    <location>
        <position position="669"/>
    </location>
    <ligand>
        <name>Zn(2+)</name>
        <dbReference type="ChEBI" id="CHEBI:29105"/>
    </ligand>
</feature>
<feature type="binding site" evidence="1">
    <location>
        <position position="673"/>
    </location>
    <ligand>
        <name>Zn(2+)</name>
        <dbReference type="ChEBI" id="CHEBI:29105"/>
    </ligand>
</feature>
<comment type="function">
    <text evidence="1">Catalyzes the attachment of alanine to tRNA(Ala) in a two-step reaction: alanine is first activated by ATP to form Ala-AMP and then transferred to the acceptor end of tRNA(Ala). Also edits incorrectly charged Ser-tRNA(Ala) and Gly-tRNA(Ala) via its editing domain.</text>
</comment>
<comment type="catalytic activity">
    <reaction evidence="1">
        <text>tRNA(Ala) + L-alanine + ATP = L-alanyl-tRNA(Ala) + AMP + diphosphate</text>
        <dbReference type="Rhea" id="RHEA:12540"/>
        <dbReference type="Rhea" id="RHEA-COMP:9657"/>
        <dbReference type="Rhea" id="RHEA-COMP:9923"/>
        <dbReference type="ChEBI" id="CHEBI:30616"/>
        <dbReference type="ChEBI" id="CHEBI:33019"/>
        <dbReference type="ChEBI" id="CHEBI:57972"/>
        <dbReference type="ChEBI" id="CHEBI:78442"/>
        <dbReference type="ChEBI" id="CHEBI:78497"/>
        <dbReference type="ChEBI" id="CHEBI:456215"/>
        <dbReference type="EC" id="6.1.1.7"/>
    </reaction>
</comment>
<comment type="cofactor">
    <cofactor evidence="1">
        <name>Zn(2+)</name>
        <dbReference type="ChEBI" id="CHEBI:29105"/>
    </cofactor>
    <text evidence="1">Binds 1 zinc ion per subunit.</text>
</comment>
<comment type="subcellular location">
    <subcellularLocation>
        <location evidence="1">Cytoplasm</location>
    </subcellularLocation>
</comment>
<comment type="domain">
    <text evidence="1">Consists of three domains; the N-terminal catalytic domain, the editing domain and the C-terminal C-Ala domain. The editing domain removes incorrectly charged amino acids, while the C-Ala domain, along with tRNA(Ala), serves as a bridge to cooperatively bring together the editing and aminoacylation centers thus stimulating deacylation of misacylated tRNAs.</text>
</comment>
<comment type="similarity">
    <text evidence="1">Belongs to the class-II aminoacyl-tRNA synthetase family.</text>
</comment>
<evidence type="ECO:0000255" key="1">
    <source>
        <dbReference type="HAMAP-Rule" id="MF_00036"/>
    </source>
</evidence>
<accession>Q8P0E6</accession>
<dbReference type="EC" id="6.1.1.7" evidence="1"/>
<dbReference type="EMBL" id="AE009949">
    <property type="protein sequence ID" value="AAL97990.1"/>
    <property type="molecule type" value="Genomic_DNA"/>
</dbReference>
<dbReference type="RefSeq" id="WP_011017937.1">
    <property type="nucleotide sequence ID" value="NC_003485.1"/>
</dbReference>
<dbReference type="SMR" id="Q8P0E6"/>
<dbReference type="KEGG" id="spm:spyM18_1399"/>
<dbReference type="HOGENOM" id="CLU_004485_1_1_9"/>
<dbReference type="GO" id="GO:0005829">
    <property type="term" value="C:cytosol"/>
    <property type="evidence" value="ECO:0007669"/>
    <property type="project" value="TreeGrafter"/>
</dbReference>
<dbReference type="GO" id="GO:0004813">
    <property type="term" value="F:alanine-tRNA ligase activity"/>
    <property type="evidence" value="ECO:0007669"/>
    <property type="project" value="UniProtKB-UniRule"/>
</dbReference>
<dbReference type="GO" id="GO:0002161">
    <property type="term" value="F:aminoacyl-tRNA deacylase activity"/>
    <property type="evidence" value="ECO:0007669"/>
    <property type="project" value="TreeGrafter"/>
</dbReference>
<dbReference type="GO" id="GO:0005524">
    <property type="term" value="F:ATP binding"/>
    <property type="evidence" value="ECO:0007669"/>
    <property type="project" value="UniProtKB-UniRule"/>
</dbReference>
<dbReference type="GO" id="GO:0140096">
    <property type="term" value="F:catalytic activity, acting on a protein"/>
    <property type="evidence" value="ECO:0007669"/>
    <property type="project" value="UniProtKB-ARBA"/>
</dbReference>
<dbReference type="GO" id="GO:0016740">
    <property type="term" value="F:transferase activity"/>
    <property type="evidence" value="ECO:0007669"/>
    <property type="project" value="UniProtKB-ARBA"/>
</dbReference>
<dbReference type="GO" id="GO:0000049">
    <property type="term" value="F:tRNA binding"/>
    <property type="evidence" value="ECO:0007669"/>
    <property type="project" value="UniProtKB-KW"/>
</dbReference>
<dbReference type="GO" id="GO:0008270">
    <property type="term" value="F:zinc ion binding"/>
    <property type="evidence" value="ECO:0007669"/>
    <property type="project" value="UniProtKB-UniRule"/>
</dbReference>
<dbReference type="GO" id="GO:0006419">
    <property type="term" value="P:alanyl-tRNA aminoacylation"/>
    <property type="evidence" value="ECO:0007669"/>
    <property type="project" value="UniProtKB-UniRule"/>
</dbReference>
<dbReference type="CDD" id="cd00673">
    <property type="entry name" value="AlaRS_core"/>
    <property type="match status" value="1"/>
</dbReference>
<dbReference type="FunFam" id="3.10.310.40:FF:000001">
    <property type="entry name" value="Alanine--tRNA ligase"/>
    <property type="match status" value="1"/>
</dbReference>
<dbReference type="FunFam" id="3.30.54.20:FF:000001">
    <property type="entry name" value="Alanine--tRNA ligase"/>
    <property type="match status" value="1"/>
</dbReference>
<dbReference type="FunFam" id="3.30.930.10:FF:000046">
    <property type="entry name" value="Alanine--tRNA ligase"/>
    <property type="match status" value="1"/>
</dbReference>
<dbReference type="FunFam" id="3.30.980.10:FF:000004">
    <property type="entry name" value="Alanine--tRNA ligase, cytoplasmic"/>
    <property type="match status" value="1"/>
</dbReference>
<dbReference type="Gene3D" id="2.40.30.130">
    <property type="match status" value="1"/>
</dbReference>
<dbReference type="Gene3D" id="3.10.310.40">
    <property type="match status" value="1"/>
</dbReference>
<dbReference type="Gene3D" id="3.30.54.20">
    <property type="match status" value="1"/>
</dbReference>
<dbReference type="Gene3D" id="6.10.250.550">
    <property type="match status" value="1"/>
</dbReference>
<dbReference type="Gene3D" id="3.30.930.10">
    <property type="entry name" value="Bira Bifunctional Protein, Domain 2"/>
    <property type="match status" value="1"/>
</dbReference>
<dbReference type="Gene3D" id="3.30.980.10">
    <property type="entry name" value="Threonyl-trna Synthetase, Chain A, domain 2"/>
    <property type="match status" value="1"/>
</dbReference>
<dbReference type="HAMAP" id="MF_00036_B">
    <property type="entry name" value="Ala_tRNA_synth_B"/>
    <property type="match status" value="1"/>
</dbReference>
<dbReference type="InterPro" id="IPR045864">
    <property type="entry name" value="aa-tRNA-synth_II/BPL/LPL"/>
</dbReference>
<dbReference type="InterPro" id="IPR002318">
    <property type="entry name" value="Ala-tRNA-lgiase_IIc"/>
</dbReference>
<dbReference type="InterPro" id="IPR018162">
    <property type="entry name" value="Ala-tRNA-ligase_IIc_anticod-bd"/>
</dbReference>
<dbReference type="InterPro" id="IPR018165">
    <property type="entry name" value="Ala-tRNA-synth_IIc_core"/>
</dbReference>
<dbReference type="InterPro" id="IPR018164">
    <property type="entry name" value="Ala-tRNA-synth_IIc_N"/>
</dbReference>
<dbReference type="InterPro" id="IPR050058">
    <property type="entry name" value="Ala-tRNA_ligase"/>
</dbReference>
<dbReference type="InterPro" id="IPR023033">
    <property type="entry name" value="Ala_tRNA_ligase_euk/bac"/>
</dbReference>
<dbReference type="InterPro" id="IPR003156">
    <property type="entry name" value="DHHA1_dom"/>
</dbReference>
<dbReference type="InterPro" id="IPR018163">
    <property type="entry name" value="Thr/Ala-tRNA-synth_IIc_edit"/>
</dbReference>
<dbReference type="InterPro" id="IPR009000">
    <property type="entry name" value="Transl_B-barrel_sf"/>
</dbReference>
<dbReference type="InterPro" id="IPR012947">
    <property type="entry name" value="tRNA_SAD"/>
</dbReference>
<dbReference type="NCBIfam" id="TIGR00344">
    <property type="entry name" value="alaS"/>
    <property type="match status" value="1"/>
</dbReference>
<dbReference type="PANTHER" id="PTHR11777:SF9">
    <property type="entry name" value="ALANINE--TRNA LIGASE, CYTOPLASMIC"/>
    <property type="match status" value="1"/>
</dbReference>
<dbReference type="PANTHER" id="PTHR11777">
    <property type="entry name" value="ALANYL-TRNA SYNTHETASE"/>
    <property type="match status" value="1"/>
</dbReference>
<dbReference type="Pfam" id="PF02272">
    <property type="entry name" value="DHHA1"/>
    <property type="match status" value="1"/>
</dbReference>
<dbReference type="Pfam" id="PF01411">
    <property type="entry name" value="tRNA-synt_2c"/>
    <property type="match status" value="1"/>
</dbReference>
<dbReference type="Pfam" id="PF07973">
    <property type="entry name" value="tRNA_SAD"/>
    <property type="match status" value="1"/>
</dbReference>
<dbReference type="PRINTS" id="PR00980">
    <property type="entry name" value="TRNASYNTHALA"/>
</dbReference>
<dbReference type="SMART" id="SM00863">
    <property type="entry name" value="tRNA_SAD"/>
    <property type="match status" value="1"/>
</dbReference>
<dbReference type="SUPFAM" id="SSF55681">
    <property type="entry name" value="Class II aaRS and biotin synthetases"/>
    <property type="match status" value="1"/>
</dbReference>
<dbReference type="SUPFAM" id="SSF101353">
    <property type="entry name" value="Putative anticodon-binding domain of alanyl-tRNA synthetase (AlaRS)"/>
    <property type="match status" value="1"/>
</dbReference>
<dbReference type="SUPFAM" id="SSF55186">
    <property type="entry name" value="ThrRS/AlaRS common domain"/>
    <property type="match status" value="1"/>
</dbReference>
<dbReference type="SUPFAM" id="SSF50447">
    <property type="entry name" value="Translation proteins"/>
    <property type="match status" value="1"/>
</dbReference>
<dbReference type="PROSITE" id="PS50860">
    <property type="entry name" value="AA_TRNA_LIGASE_II_ALA"/>
    <property type="match status" value="1"/>
</dbReference>